<protein>
    <recommendedName>
        <fullName>NEP1-interacting protein-like 1</fullName>
    </recommendedName>
    <alternativeName>
        <fullName>RING-H2 finger protein ATL27</fullName>
    </alternativeName>
</protein>
<sequence length="221" mass="24115">MDGYYSLSPISVLHRIKDSFHFAVSALLANLFSALFTFFFALVGTLLGALTGALIGQETESGFIRGAAVGAISGAVFSIEVFESSLLLWQSDESGIGCLLYLIDVIASLLSGRLVRERIGPAMLSAVQSQMGAVESQFQDHTDIFDTAISKGLTGDSLNRIPKVRITDTSPEIVSCSVCLQDFQVGETVRSLPHCHHMFHLPCIDKWLRRHASCPLCRRHL</sequence>
<evidence type="ECO:0000255" key="1"/>
<evidence type="ECO:0000255" key="2">
    <source>
        <dbReference type="PROSITE-ProRule" id="PRU00175"/>
    </source>
</evidence>
<evidence type="ECO:0000269" key="3">
    <source>
    </source>
</evidence>
<evidence type="ECO:0000305" key="4"/>
<evidence type="ECO:0000305" key="5">
    <source>
    </source>
</evidence>
<name>NIPL1_ARATH</name>
<proteinExistence type="evidence at transcript level"/>
<reference key="1">
    <citation type="journal article" date="1998" name="DNA Res.">
        <title>Structural analysis of Arabidopsis thaliana chromosome 5. V. Sequence features of the regions of 1,381,565 bp covered by twenty one physically assigned P1 and TAC clones.</title>
        <authorList>
            <person name="Kaneko T."/>
            <person name="Kotani H."/>
            <person name="Nakamura Y."/>
            <person name="Sato S."/>
            <person name="Asamizu E."/>
            <person name="Miyajima N."/>
            <person name="Tabata S."/>
        </authorList>
    </citation>
    <scope>NUCLEOTIDE SEQUENCE [LARGE SCALE GENOMIC DNA]</scope>
    <source>
        <strain>cv. Columbia</strain>
    </source>
</reference>
<reference key="2">
    <citation type="journal article" date="2017" name="Plant J.">
        <title>Araport11: a complete reannotation of the Arabidopsis thaliana reference genome.</title>
        <authorList>
            <person name="Cheng C.Y."/>
            <person name="Krishnakumar V."/>
            <person name="Chan A.P."/>
            <person name="Thibaud-Nissen F."/>
            <person name="Schobel S."/>
            <person name="Town C.D."/>
        </authorList>
    </citation>
    <scope>GENOME REANNOTATION</scope>
    <source>
        <strain>cv. Columbia</strain>
    </source>
</reference>
<reference key="3">
    <citation type="submission" date="2004-06" db="EMBL/GenBank/DDBJ databases">
        <title>Arabidopsis ORF clones.</title>
        <authorList>
            <person name="Cheuk R.F."/>
            <person name="Chen H."/>
            <person name="Kim C.J."/>
            <person name="Shinn P."/>
            <person name="Ecker J.R."/>
        </authorList>
    </citation>
    <scope>NUCLEOTIDE SEQUENCE [LARGE SCALE MRNA]</scope>
    <source>
        <strain>cv. Columbia</strain>
    </source>
</reference>
<reference key="4">
    <citation type="journal article" date="2002" name="Genome Biol.">
        <title>Evaluation and classification of RING-finger domains encoded by the Arabidopsis genome.</title>
        <authorList>
            <person name="Kosarev P."/>
            <person name="Mayer K.F.X."/>
            <person name="Hardtke C.S."/>
        </authorList>
    </citation>
    <scope>GENE FAMILY ORGANIZATION</scope>
</reference>
<reference key="5">
    <citation type="journal article" date="2006" name="J. Mol. Evol.">
        <title>The ATL gene family from Arabidopsis thaliana and Oryza sativa comprises a large number of putative ubiquitin ligases of the RING-H2 type.</title>
        <authorList>
            <person name="Serrano M."/>
            <person name="Parra S."/>
            <person name="Alcaraz L.D."/>
            <person name="Guzman P."/>
        </authorList>
    </citation>
    <scope>NOMENCLATURE</scope>
    <scope>GENE FAMILY ORGANIZATION</scope>
</reference>
<reference key="6">
    <citation type="journal article" date="2007" name="Mol. Plant Microbe Interact.">
        <title>Identification of 118 Arabidopsis transcription factor and 30 ubiquitin-ligase genes responding to chitin, a plant-defense elicitor.</title>
        <authorList>
            <person name="Libault M."/>
            <person name="Wan J."/>
            <person name="Czechowski T."/>
            <person name="Udvardi M."/>
            <person name="Stacey G."/>
        </authorList>
    </citation>
    <scope>INDUCTION BY CHITIN</scope>
</reference>
<comment type="function">
    <text>May be involved in the early steps of the plant defense signaling pathway.</text>
</comment>
<comment type="subcellular location">
    <subcellularLocation>
        <location evidence="4">Membrane</location>
        <topology evidence="4">Multi-pass membrane protein</topology>
    </subcellularLocation>
</comment>
<comment type="alternative products">
    <event type="alternative splicing"/>
    <isoform>
        <id>Q9FKX5-1</id>
        <name>1</name>
        <sequence type="displayed"/>
    </isoform>
    <text>A number of isoforms are produced. According to EST sequences.</text>
</comment>
<comment type="induction">
    <text evidence="3">Up-regulated by chitin.</text>
</comment>
<comment type="similarity">
    <text evidence="4">Belongs to the RING-type zinc finger family. NIP subfamily.</text>
</comment>
<comment type="caution">
    <text evidence="5">Was originally assigned as a member of the E3 ubiquitin-protein ligase ATL subfamily.</text>
</comment>
<gene>
    <name type="primary">ATL27</name>
    <name type="ordered locus">At5g66070</name>
    <name type="ORF">K2A18.15</name>
</gene>
<dbReference type="EMBL" id="AB011474">
    <property type="protein sequence ID" value="BAB10412.1"/>
    <property type="molecule type" value="Genomic_DNA"/>
</dbReference>
<dbReference type="EMBL" id="CP002688">
    <property type="protein sequence ID" value="AED98155.1"/>
    <property type="molecule type" value="Genomic_DNA"/>
</dbReference>
<dbReference type="EMBL" id="CP002688">
    <property type="protein sequence ID" value="ANM70890.1"/>
    <property type="molecule type" value="Genomic_DNA"/>
</dbReference>
<dbReference type="EMBL" id="BT012531">
    <property type="protein sequence ID" value="AAS99675.1"/>
    <property type="molecule type" value="mRNA"/>
</dbReference>
<dbReference type="EMBL" id="BT014957">
    <property type="protein sequence ID" value="AAT47808.1"/>
    <property type="molecule type" value="mRNA"/>
</dbReference>
<dbReference type="RefSeq" id="NP_001332466.1">
    <molecule id="Q9FKX5-1"/>
    <property type="nucleotide sequence ID" value="NM_001345743.1"/>
</dbReference>
<dbReference type="RefSeq" id="NP_201408.1">
    <molecule id="Q9FKX5-1"/>
    <property type="nucleotide sequence ID" value="NM_126005.4"/>
</dbReference>
<dbReference type="SMR" id="Q9FKX5"/>
<dbReference type="FunCoup" id="Q9FKX5">
    <property type="interactions" value="2"/>
</dbReference>
<dbReference type="STRING" id="3702.Q9FKX5"/>
<dbReference type="PaxDb" id="3702-AT5G66070.2"/>
<dbReference type="EnsemblPlants" id="AT5G66070.1">
    <molecule id="Q9FKX5-1"/>
    <property type="protein sequence ID" value="AT5G66070.1"/>
    <property type="gene ID" value="AT5G66070"/>
</dbReference>
<dbReference type="EnsemblPlants" id="AT5G66070.5">
    <molecule id="Q9FKX5-1"/>
    <property type="protein sequence ID" value="AT5G66070.5"/>
    <property type="gene ID" value="AT5G66070"/>
</dbReference>
<dbReference type="GeneID" id="836739"/>
<dbReference type="Gramene" id="AT5G66070.1">
    <molecule id="Q9FKX5-1"/>
    <property type="protein sequence ID" value="AT5G66070.1"/>
    <property type="gene ID" value="AT5G66070"/>
</dbReference>
<dbReference type="Gramene" id="AT5G66070.5">
    <molecule id="Q9FKX5-1"/>
    <property type="protein sequence ID" value="AT5G66070.5"/>
    <property type="gene ID" value="AT5G66070"/>
</dbReference>
<dbReference type="KEGG" id="ath:AT5G66070"/>
<dbReference type="Araport" id="AT5G66070"/>
<dbReference type="TAIR" id="AT5G66070">
    <property type="gene designation" value="ATARRE"/>
</dbReference>
<dbReference type="eggNOG" id="KOG0800">
    <property type="taxonomic scope" value="Eukaryota"/>
</dbReference>
<dbReference type="HOGENOM" id="CLU_013137_2_1_1"/>
<dbReference type="InParanoid" id="Q9FKX5"/>
<dbReference type="PhylomeDB" id="Q9FKX5"/>
<dbReference type="PRO" id="PR:Q9FKX5"/>
<dbReference type="Proteomes" id="UP000006548">
    <property type="component" value="Chromosome 5"/>
</dbReference>
<dbReference type="ExpressionAtlas" id="Q9FKX5">
    <property type="expression patterns" value="baseline and differential"/>
</dbReference>
<dbReference type="GO" id="GO:0016020">
    <property type="term" value="C:membrane"/>
    <property type="evidence" value="ECO:0007669"/>
    <property type="project" value="UniProtKB-SubCell"/>
</dbReference>
<dbReference type="GO" id="GO:0008270">
    <property type="term" value="F:zinc ion binding"/>
    <property type="evidence" value="ECO:0007669"/>
    <property type="project" value="UniProtKB-KW"/>
</dbReference>
<dbReference type="GO" id="GO:0006952">
    <property type="term" value="P:defense response"/>
    <property type="evidence" value="ECO:0007669"/>
    <property type="project" value="UniProtKB-KW"/>
</dbReference>
<dbReference type="CDD" id="cd23119">
    <property type="entry name" value="RING-H2_NIPL1-like"/>
    <property type="match status" value="1"/>
</dbReference>
<dbReference type="FunFam" id="3.30.40.10:FF:000505">
    <property type="entry name" value="NEP1-interacting protein-like 1"/>
    <property type="match status" value="1"/>
</dbReference>
<dbReference type="Gene3D" id="3.30.40.10">
    <property type="entry name" value="Zinc/RING finger domain, C3HC4 (zinc finger)"/>
    <property type="match status" value="1"/>
</dbReference>
<dbReference type="InterPro" id="IPR027367">
    <property type="entry name" value="Gly-zipper_YMGG"/>
</dbReference>
<dbReference type="InterPro" id="IPR001841">
    <property type="entry name" value="Znf_RING"/>
</dbReference>
<dbReference type="InterPro" id="IPR013083">
    <property type="entry name" value="Znf_RING/FYVE/PHD"/>
</dbReference>
<dbReference type="PANTHER" id="PTHR46151:SF17">
    <property type="entry name" value="NEP1-INTERACTING PROTEIN-LIKE 1"/>
    <property type="match status" value="1"/>
</dbReference>
<dbReference type="PANTHER" id="PTHR46151">
    <property type="entry name" value="NEP1-INTERACTING PROTEIN-LIKE 2"/>
    <property type="match status" value="1"/>
</dbReference>
<dbReference type="Pfam" id="PF13441">
    <property type="entry name" value="Gly-zipper_YMGG"/>
    <property type="match status" value="1"/>
</dbReference>
<dbReference type="Pfam" id="PF13639">
    <property type="entry name" value="zf-RING_2"/>
    <property type="match status" value="1"/>
</dbReference>
<dbReference type="SMART" id="SM00184">
    <property type="entry name" value="RING"/>
    <property type="match status" value="1"/>
</dbReference>
<dbReference type="SUPFAM" id="SSF57850">
    <property type="entry name" value="RING/U-box"/>
    <property type="match status" value="1"/>
</dbReference>
<dbReference type="PROSITE" id="PS50089">
    <property type="entry name" value="ZF_RING_2"/>
    <property type="match status" value="1"/>
</dbReference>
<feature type="chain" id="PRO_0000055818" description="NEP1-interacting protein-like 1">
    <location>
        <begin position="1"/>
        <end position="221"/>
    </location>
</feature>
<feature type="transmembrane region" description="Helical" evidence="1">
    <location>
        <begin position="35"/>
        <end position="55"/>
    </location>
</feature>
<feature type="transmembrane region" description="Helical" evidence="1">
    <location>
        <begin position="69"/>
        <end position="89"/>
    </location>
</feature>
<feature type="transmembrane region" description="Helical" evidence="1">
    <location>
        <begin position="95"/>
        <end position="115"/>
    </location>
</feature>
<feature type="zinc finger region" description="RING-type; atypical" evidence="2">
    <location>
        <begin position="176"/>
        <end position="218"/>
    </location>
</feature>
<keyword id="KW-0025">Alternative splicing</keyword>
<keyword id="KW-0472">Membrane</keyword>
<keyword id="KW-0479">Metal-binding</keyword>
<keyword id="KW-0611">Plant defense</keyword>
<keyword id="KW-1185">Reference proteome</keyword>
<keyword id="KW-0812">Transmembrane</keyword>
<keyword id="KW-1133">Transmembrane helix</keyword>
<keyword id="KW-0862">Zinc</keyword>
<keyword id="KW-0863">Zinc-finger</keyword>
<accession>Q9FKX5</accession>
<organism>
    <name type="scientific">Arabidopsis thaliana</name>
    <name type="common">Mouse-ear cress</name>
    <dbReference type="NCBI Taxonomy" id="3702"/>
    <lineage>
        <taxon>Eukaryota</taxon>
        <taxon>Viridiplantae</taxon>
        <taxon>Streptophyta</taxon>
        <taxon>Embryophyta</taxon>
        <taxon>Tracheophyta</taxon>
        <taxon>Spermatophyta</taxon>
        <taxon>Magnoliopsida</taxon>
        <taxon>eudicotyledons</taxon>
        <taxon>Gunneridae</taxon>
        <taxon>Pentapetalae</taxon>
        <taxon>rosids</taxon>
        <taxon>malvids</taxon>
        <taxon>Brassicales</taxon>
        <taxon>Brassicaceae</taxon>
        <taxon>Camelineae</taxon>
        <taxon>Arabidopsis</taxon>
    </lineage>
</organism>